<dbReference type="EMBL" id="AP008232">
    <property type="protein sequence ID" value="BAE74376.1"/>
    <property type="molecule type" value="Genomic_DNA"/>
</dbReference>
<dbReference type="RefSeq" id="WP_011410736.1">
    <property type="nucleotide sequence ID" value="NC_007712.1"/>
</dbReference>
<dbReference type="SMR" id="Q2NTZ9"/>
<dbReference type="STRING" id="343509.SG1101"/>
<dbReference type="KEGG" id="sgl:SG1101"/>
<dbReference type="eggNOG" id="COG2127">
    <property type="taxonomic scope" value="Bacteria"/>
</dbReference>
<dbReference type="HOGENOM" id="CLU_134358_2_1_6"/>
<dbReference type="OrthoDB" id="9796121at2"/>
<dbReference type="BioCyc" id="SGLO343509:SGP1_RS09470-MONOMER"/>
<dbReference type="Proteomes" id="UP000001932">
    <property type="component" value="Chromosome"/>
</dbReference>
<dbReference type="GO" id="GO:0030163">
    <property type="term" value="P:protein catabolic process"/>
    <property type="evidence" value="ECO:0007669"/>
    <property type="project" value="InterPro"/>
</dbReference>
<dbReference type="GO" id="GO:0006508">
    <property type="term" value="P:proteolysis"/>
    <property type="evidence" value="ECO:0007669"/>
    <property type="project" value="UniProtKB-UniRule"/>
</dbReference>
<dbReference type="FunFam" id="3.30.1390.10:FF:000002">
    <property type="entry name" value="ATP-dependent Clp protease adapter protein ClpS"/>
    <property type="match status" value="1"/>
</dbReference>
<dbReference type="Gene3D" id="3.30.1390.10">
    <property type="match status" value="1"/>
</dbReference>
<dbReference type="HAMAP" id="MF_00302">
    <property type="entry name" value="ClpS"/>
    <property type="match status" value="1"/>
</dbReference>
<dbReference type="InterPro" id="IPR022935">
    <property type="entry name" value="ClpS"/>
</dbReference>
<dbReference type="InterPro" id="IPR003769">
    <property type="entry name" value="ClpS_core"/>
</dbReference>
<dbReference type="InterPro" id="IPR014719">
    <property type="entry name" value="Ribosomal_bL12_C/ClpS-like"/>
</dbReference>
<dbReference type="NCBIfam" id="NF000670">
    <property type="entry name" value="PRK00033.1-3"/>
    <property type="match status" value="1"/>
</dbReference>
<dbReference type="NCBIfam" id="NF000672">
    <property type="entry name" value="PRK00033.1-5"/>
    <property type="match status" value="1"/>
</dbReference>
<dbReference type="PANTHER" id="PTHR33473:SF19">
    <property type="entry name" value="ATP-DEPENDENT CLP PROTEASE ADAPTER PROTEIN CLPS"/>
    <property type="match status" value="1"/>
</dbReference>
<dbReference type="PANTHER" id="PTHR33473">
    <property type="entry name" value="ATP-DEPENDENT CLP PROTEASE ADAPTER PROTEIN CLPS1, CHLOROPLASTIC"/>
    <property type="match status" value="1"/>
</dbReference>
<dbReference type="Pfam" id="PF02617">
    <property type="entry name" value="ClpS"/>
    <property type="match status" value="1"/>
</dbReference>
<dbReference type="SUPFAM" id="SSF54736">
    <property type="entry name" value="ClpS-like"/>
    <property type="match status" value="1"/>
</dbReference>
<organism>
    <name type="scientific">Sodalis glossinidius (strain morsitans)</name>
    <dbReference type="NCBI Taxonomy" id="343509"/>
    <lineage>
        <taxon>Bacteria</taxon>
        <taxon>Pseudomonadati</taxon>
        <taxon>Pseudomonadota</taxon>
        <taxon>Gammaproteobacteria</taxon>
        <taxon>Enterobacterales</taxon>
        <taxon>Bruguierivoracaceae</taxon>
        <taxon>Sodalis</taxon>
    </lineage>
</organism>
<name>CLPS_SODGM</name>
<evidence type="ECO:0000255" key="1">
    <source>
        <dbReference type="HAMAP-Rule" id="MF_00302"/>
    </source>
</evidence>
<protein>
    <recommendedName>
        <fullName evidence="1">ATP-dependent Clp protease adapter protein ClpS</fullName>
    </recommendedName>
</protein>
<proteinExistence type="inferred from homology"/>
<feature type="chain" id="PRO_0000300730" description="ATP-dependent Clp protease adapter protein ClpS">
    <location>
        <begin position="1"/>
        <end position="106"/>
    </location>
</feature>
<comment type="function">
    <text evidence="1">Involved in the modulation of the specificity of the ClpAP-mediated ATP-dependent protein degradation.</text>
</comment>
<comment type="subunit">
    <text evidence="1">Binds to the N-terminal domain of the chaperone ClpA.</text>
</comment>
<comment type="similarity">
    <text evidence="1">Belongs to the ClpS family.</text>
</comment>
<sequence>MGKTSDRLDEQHLAEEQVKDAVRPPSMYKVILINDDYTPMEFVIDVLQKFFSYDVERATQLMLRVHYQGKAVCGIYTAEVAETKAVHVNRYARENEHPLLCTLEKA</sequence>
<gene>
    <name evidence="1" type="primary">clpS</name>
    <name type="ordered locus">SG1101</name>
</gene>
<reference key="1">
    <citation type="journal article" date="2006" name="Genome Res.">
        <title>Massive genome erosion and functional adaptations provide insights into the symbiotic lifestyle of Sodalis glossinidius in the tsetse host.</title>
        <authorList>
            <person name="Toh H."/>
            <person name="Weiss B.L."/>
            <person name="Perkin S.A.H."/>
            <person name="Yamashita A."/>
            <person name="Oshima K."/>
            <person name="Hattori M."/>
            <person name="Aksoy S."/>
        </authorList>
    </citation>
    <scope>NUCLEOTIDE SEQUENCE [LARGE SCALE GENOMIC DNA]</scope>
    <source>
        <strain>morsitans</strain>
    </source>
</reference>
<accession>Q2NTZ9</accession>